<organism>
    <name type="scientific">Listeria welshimeri serovar 6b (strain ATCC 35897 / DSM 20650 / CCUG 15529 / CIP 8149 / NCTC 11857 / SLCC 5334 / V8)</name>
    <dbReference type="NCBI Taxonomy" id="386043"/>
    <lineage>
        <taxon>Bacteria</taxon>
        <taxon>Bacillati</taxon>
        <taxon>Bacillota</taxon>
        <taxon>Bacilli</taxon>
        <taxon>Bacillales</taxon>
        <taxon>Listeriaceae</taxon>
        <taxon>Listeria</taxon>
    </lineage>
</organism>
<comment type="function">
    <text evidence="1">Negative regulator of FtsZ ring formation; modulates the frequency and position of FtsZ ring formation. Inhibits FtsZ ring formation at polar sites. Interacts either with FtsZ or with one of its binding partners to promote depolymerization.</text>
</comment>
<comment type="subcellular location">
    <subcellularLocation>
        <location evidence="1">Cell membrane</location>
        <topology evidence="1">Single-pass membrane protein</topology>
    </subcellularLocation>
    <text evidence="1">Colocalized with FtsZ to the nascent septal site.</text>
</comment>
<comment type="similarity">
    <text evidence="1">Belongs to the EzrA family.</text>
</comment>
<keyword id="KW-0131">Cell cycle</keyword>
<keyword id="KW-0132">Cell division</keyword>
<keyword id="KW-1003">Cell membrane</keyword>
<keyword id="KW-0175">Coiled coil</keyword>
<keyword id="KW-0472">Membrane</keyword>
<keyword id="KW-0717">Septation</keyword>
<keyword id="KW-0812">Transmembrane</keyword>
<keyword id="KW-1133">Transmembrane helix</keyword>
<feature type="chain" id="PRO_1000045900" description="Septation ring formation regulator EzrA">
    <location>
        <begin position="1"/>
        <end position="571"/>
    </location>
</feature>
<feature type="topological domain" description="Extracellular" evidence="1">
    <location>
        <begin position="1"/>
        <end position="3"/>
    </location>
</feature>
<feature type="transmembrane region" description="Helical" evidence="1">
    <location>
        <begin position="4"/>
        <end position="22"/>
    </location>
</feature>
<feature type="topological domain" description="Cytoplasmic" evidence="1">
    <location>
        <begin position="23"/>
        <end position="571"/>
    </location>
</feature>
<feature type="coiled-coil region" evidence="1">
    <location>
        <begin position="169"/>
        <end position="214"/>
    </location>
</feature>
<feature type="coiled-coil region" evidence="1">
    <location>
        <begin position="249"/>
        <end position="298"/>
    </location>
</feature>
<feature type="coiled-coil region" evidence="1">
    <location>
        <begin position="326"/>
        <end position="374"/>
    </location>
</feature>
<feature type="coiled-coil region" evidence="1">
    <location>
        <begin position="400"/>
        <end position="438"/>
    </location>
</feature>
<feature type="coiled-coil region" evidence="1">
    <location>
        <begin position="474"/>
        <end position="529"/>
    </location>
</feature>
<reference key="1">
    <citation type="journal article" date="2006" name="J. Bacteriol.">
        <title>Whole-genome sequence of Listeria welshimeri reveals common steps in genome reduction with Listeria innocua as compared to Listeria monocytogenes.</title>
        <authorList>
            <person name="Hain T."/>
            <person name="Steinweg C."/>
            <person name="Kuenne C.T."/>
            <person name="Billion A."/>
            <person name="Ghai R."/>
            <person name="Chatterjee S.S."/>
            <person name="Domann E."/>
            <person name="Kaerst U."/>
            <person name="Goesmann A."/>
            <person name="Bekel T."/>
            <person name="Bartels D."/>
            <person name="Kaiser O."/>
            <person name="Meyer F."/>
            <person name="Puehler A."/>
            <person name="Weisshaar B."/>
            <person name="Wehland J."/>
            <person name="Liang C."/>
            <person name="Dandekar T."/>
            <person name="Lampidis R."/>
            <person name="Kreft J."/>
            <person name="Goebel W."/>
            <person name="Chakraborty T."/>
        </authorList>
    </citation>
    <scope>NUCLEOTIDE SEQUENCE [LARGE SCALE GENOMIC DNA]</scope>
    <source>
        <strain>ATCC 35897 / DSM 20650 / CCUG 15529 / CIP 8149 / NCTC 11857 / SLCC 5334 / V8</strain>
    </source>
</reference>
<name>EZRA_LISW6</name>
<gene>
    <name evidence="1" type="primary">ezrA</name>
    <name type="ordered locus">lwe1607</name>
</gene>
<evidence type="ECO:0000255" key="1">
    <source>
        <dbReference type="HAMAP-Rule" id="MF_00728"/>
    </source>
</evidence>
<proteinExistence type="inferred from homology"/>
<sequence>MYYMLIGFIIVVIAIISAGYILKRKHYQRINELEETKIKLRERPVIDELSKVKKLKLTGQTEALFESWRSSWDEIETRLFPDLEEVLLEAEMNTDRYKFRSATYVENDIEQMLVVIEKQMDQILGGLKELLISEEKNAKESRMTKEKFAELRREVLTRGFKLGDTLPYVETKLDELAENLNRYDLLTDQGDHLEAREIVLIVQKEMKVIEAQMERIPSLLHETDTILPEEMNKLRAGYEEMVRKGYYLAQMELDKEITRMKTQIDKMKRNVINLDLDEAEQGIEELHNEIDLFYDTLEHEAEARHFVKENHSPTSDKLQRQNTVSDALAEQITEVKQTYHVAEDDLAVYLKTSAKLSEAKENFEQLTALIASGEIAYSAAQDTLKEIDAALISIGAEQDKFAEELRSLRKDELEARDDAERMRRAIVTLDRKMERERLPGLPEEYLSLREHMGESIDALEKRLEEKPLNMKAVTQDWRIAEEDLNHLTEKAEEMMENVRLVEHVIQYANRYRLRNKELADELVQAENHFYNDYQYKKALEIAVTALEKVETGAFKKVEKAYESKVSVDDIE</sequence>
<protein>
    <recommendedName>
        <fullName evidence="1">Septation ring formation regulator EzrA</fullName>
    </recommendedName>
</protein>
<dbReference type="EMBL" id="AM263198">
    <property type="protein sequence ID" value="CAK21025.1"/>
    <property type="molecule type" value="Genomic_DNA"/>
</dbReference>
<dbReference type="RefSeq" id="WP_011702392.1">
    <property type="nucleotide sequence ID" value="NC_008555.1"/>
</dbReference>
<dbReference type="SMR" id="A0AJ43"/>
<dbReference type="STRING" id="386043.lwe1607"/>
<dbReference type="GeneID" id="61189484"/>
<dbReference type="KEGG" id="lwe:lwe1607"/>
<dbReference type="eggNOG" id="COG4477">
    <property type="taxonomic scope" value="Bacteria"/>
</dbReference>
<dbReference type="HOGENOM" id="CLU_034079_2_0_9"/>
<dbReference type="OrthoDB" id="1654473at2"/>
<dbReference type="Proteomes" id="UP000000779">
    <property type="component" value="Chromosome"/>
</dbReference>
<dbReference type="GO" id="GO:0005886">
    <property type="term" value="C:plasma membrane"/>
    <property type="evidence" value="ECO:0007669"/>
    <property type="project" value="UniProtKB-SubCell"/>
</dbReference>
<dbReference type="GO" id="GO:0005940">
    <property type="term" value="C:septin ring"/>
    <property type="evidence" value="ECO:0007669"/>
    <property type="project" value="InterPro"/>
</dbReference>
<dbReference type="GO" id="GO:0000917">
    <property type="term" value="P:division septum assembly"/>
    <property type="evidence" value="ECO:0007669"/>
    <property type="project" value="UniProtKB-KW"/>
</dbReference>
<dbReference type="GO" id="GO:0000921">
    <property type="term" value="P:septin ring assembly"/>
    <property type="evidence" value="ECO:0007669"/>
    <property type="project" value="InterPro"/>
</dbReference>
<dbReference type="HAMAP" id="MF_00728">
    <property type="entry name" value="EzrA"/>
    <property type="match status" value="1"/>
</dbReference>
<dbReference type="InterPro" id="IPR010379">
    <property type="entry name" value="EzrA"/>
</dbReference>
<dbReference type="NCBIfam" id="NF003408">
    <property type="entry name" value="PRK04778.1-2"/>
    <property type="match status" value="1"/>
</dbReference>
<dbReference type="Pfam" id="PF06160">
    <property type="entry name" value="EzrA"/>
    <property type="match status" value="1"/>
</dbReference>
<accession>A0AJ43</accession>